<feature type="chain" id="PRO_0000273607" description="S-adenosylmethionine decarboxylase beta chain" evidence="1">
    <location>
        <begin position="1"/>
        <end position="111"/>
    </location>
</feature>
<feature type="chain" id="PRO_0000273608" description="S-adenosylmethionine decarboxylase alpha chain" evidence="1">
    <location>
        <begin position="112"/>
        <end position="264"/>
    </location>
</feature>
<feature type="active site" description="Schiff-base intermediate with substrate; via pyruvic acid" evidence="1">
    <location>
        <position position="112"/>
    </location>
</feature>
<feature type="active site" description="Proton acceptor; for processing activity" evidence="1">
    <location>
        <position position="117"/>
    </location>
</feature>
<feature type="active site" description="Proton donor; for catalytic activity" evidence="1">
    <location>
        <position position="140"/>
    </location>
</feature>
<feature type="site" description="Cleavage (non-hydrolytic); by autolysis" evidence="1">
    <location>
        <begin position="111"/>
        <end position="112"/>
    </location>
</feature>
<feature type="modified residue" description="Pyruvic acid (Ser); by autocatalysis" evidence="1">
    <location>
        <position position="112"/>
    </location>
</feature>
<organism>
    <name type="scientific">Salmonella choleraesuis (strain SC-B67)</name>
    <dbReference type="NCBI Taxonomy" id="321314"/>
    <lineage>
        <taxon>Bacteria</taxon>
        <taxon>Pseudomonadati</taxon>
        <taxon>Pseudomonadota</taxon>
        <taxon>Gammaproteobacteria</taxon>
        <taxon>Enterobacterales</taxon>
        <taxon>Enterobacteriaceae</taxon>
        <taxon>Salmonella</taxon>
    </lineage>
</organism>
<reference key="1">
    <citation type="journal article" date="2005" name="Nucleic Acids Res.">
        <title>The genome sequence of Salmonella enterica serovar Choleraesuis, a highly invasive and resistant zoonotic pathogen.</title>
        <authorList>
            <person name="Chiu C.-H."/>
            <person name="Tang P."/>
            <person name="Chu C."/>
            <person name="Hu S."/>
            <person name="Bao Q."/>
            <person name="Yu J."/>
            <person name="Chou Y.-Y."/>
            <person name="Wang H.-S."/>
            <person name="Lee Y.-S."/>
        </authorList>
    </citation>
    <scope>NUCLEOTIDE SEQUENCE [LARGE SCALE GENOMIC DNA]</scope>
    <source>
        <strain>SC-B67</strain>
    </source>
</reference>
<protein>
    <recommendedName>
        <fullName evidence="1">S-adenosylmethionine decarboxylase proenzyme</fullName>
        <shortName evidence="1">AdoMetDC</shortName>
        <shortName evidence="1">SAMDC</shortName>
        <ecNumber evidence="1">4.1.1.50</ecNumber>
    </recommendedName>
    <component>
        <recommendedName>
            <fullName evidence="1">S-adenosylmethionine decarboxylase beta chain</fullName>
        </recommendedName>
    </component>
    <component>
        <recommendedName>
            <fullName evidence="1">S-adenosylmethionine decarboxylase alpha chain</fullName>
        </recommendedName>
    </component>
</protein>
<dbReference type="EC" id="4.1.1.50" evidence="1"/>
<dbReference type="EMBL" id="AE017220">
    <property type="protein sequence ID" value="AAX64071.1"/>
    <property type="molecule type" value="Genomic_DNA"/>
</dbReference>
<dbReference type="RefSeq" id="WP_001539015.1">
    <property type="nucleotide sequence ID" value="NC_006905.1"/>
</dbReference>
<dbReference type="SMR" id="Q57T90"/>
<dbReference type="KEGG" id="sec:SCH_0165"/>
<dbReference type="HOGENOM" id="CLU_092007_0_0_6"/>
<dbReference type="UniPathway" id="UPA00331">
    <property type="reaction ID" value="UER00451"/>
</dbReference>
<dbReference type="Proteomes" id="UP000000538">
    <property type="component" value="Chromosome"/>
</dbReference>
<dbReference type="GO" id="GO:0005829">
    <property type="term" value="C:cytosol"/>
    <property type="evidence" value="ECO:0007669"/>
    <property type="project" value="TreeGrafter"/>
</dbReference>
<dbReference type="GO" id="GO:0004014">
    <property type="term" value="F:adenosylmethionine decarboxylase activity"/>
    <property type="evidence" value="ECO:0007669"/>
    <property type="project" value="UniProtKB-UniRule"/>
</dbReference>
<dbReference type="GO" id="GO:0008295">
    <property type="term" value="P:spermidine biosynthetic process"/>
    <property type="evidence" value="ECO:0007669"/>
    <property type="project" value="UniProtKB-UniRule"/>
</dbReference>
<dbReference type="FunFam" id="3.60.90.10:FF:000001">
    <property type="entry name" value="S-adenosylmethionine decarboxylase proenzyme"/>
    <property type="match status" value="1"/>
</dbReference>
<dbReference type="Gene3D" id="3.60.90.10">
    <property type="entry name" value="S-adenosylmethionine decarboxylase"/>
    <property type="match status" value="1"/>
</dbReference>
<dbReference type="HAMAP" id="MF_00465">
    <property type="entry name" value="AdoMetDC_2"/>
    <property type="match status" value="1"/>
</dbReference>
<dbReference type="InterPro" id="IPR003826">
    <property type="entry name" value="AdoMetDC_fam_prok"/>
</dbReference>
<dbReference type="InterPro" id="IPR009165">
    <property type="entry name" value="S-AdoMet_deCO2ase_bac"/>
</dbReference>
<dbReference type="InterPro" id="IPR016067">
    <property type="entry name" value="S-AdoMet_deCO2ase_core"/>
</dbReference>
<dbReference type="NCBIfam" id="TIGR03331">
    <property type="entry name" value="SAM_DCase_Eco"/>
    <property type="match status" value="1"/>
</dbReference>
<dbReference type="PANTHER" id="PTHR33866">
    <property type="entry name" value="S-ADENOSYLMETHIONINE DECARBOXYLASE PROENZYME"/>
    <property type="match status" value="1"/>
</dbReference>
<dbReference type="PANTHER" id="PTHR33866:SF1">
    <property type="entry name" value="S-ADENOSYLMETHIONINE DECARBOXYLASE PROENZYME"/>
    <property type="match status" value="1"/>
</dbReference>
<dbReference type="Pfam" id="PF02675">
    <property type="entry name" value="AdoMet_dc"/>
    <property type="match status" value="1"/>
</dbReference>
<dbReference type="PIRSF" id="PIRSF001356">
    <property type="entry name" value="SAM_decarboxylas"/>
    <property type="match status" value="1"/>
</dbReference>
<dbReference type="SUPFAM" id="SSF56276">
    <property type="entry name" value="S-adenosylmethionine decarboxylase"/>
    <property type="match status" value="1"/>
</dbReference>
<comment type="function">
    <text evidence="1">Catalyzes the decarboxylation of S-adenosylmethionine to S-adenosylmethioninamine (dcAdoMet), the propylamine donor required for the synthesis of the polyamines spermine and spermidine from the diamine putrescine.</text>
</comment>
<comment type="catalytic activity">
    <reaction evidence="1">
        <text>S-adenosyl-L-methionine + H(+) = S-adenosyl 3-(methylsulfanyl)propylamine + CO2</text>
        <dbReference type="Rhea" id="RHEA:15981"/>
        <dbReference type="ChEBI" id="CHEBI:15378"/>
        <dbReference type="ChEBI" id="CHEBI:16526"/>
        <dbReference type="ChEBI" id="CHEBI:57443"/>
        <dbReference type="ChEBI" id="CHEBI:59789"/>
        <dbReference type="EC" id="4.1.1.50"/>
    </reaction>
</comment>
<comment type="cofactor">
    <cofactor evidence="1">
        <name>pyruvate</name>
        <dbReference type="ChEBI" id="CHEBI:15361"/>
    </cofactor>
    <text evidence="1">Binds 1 pyruvoyl group covalently per subunit.</text>
</comment>
<comment type="pathway">
    <text evidence="1">Amine and polyamine biosynthesis; S-adenosylmethioninamine biosynthesis; S-adenosylmethioninamine from S-adenosyl-L-methionine: step 1/1.</text>
</comment>
<comment type="subunit">
    <text evidence="1">Heterooctamer of four alpha and four beta chains arranged as a tetramer of alpha/beta heterodimers.</text>
</comment>
<comment type="PTM">
    <text evidence="1">Is synthesized initially as an inactive proenzyme. Formation of the active enzyme involves a self-maturation process in which the active site pyruvoyl group is generated from an internal serine residue via an autocatalytic post-translational modification. Two non-identical subunits are generated from the proenzyme in this reaction, and the pyruvate is formed at the N-terminus of the alpha chain, which is derived from the carboxyl end of the proenzyme. The post-translation cleavage follows an unusual pathway, termed non-hydrolytic serinolysis, in which the side chain hydroxyl group of the serine supplies its oxygen atom to form the C-terminus of the beta chain, while the remainder of the serine residue undergoes an oxidative deamination to produce ammonia and the pyruvoyl group blocking the N-terminus of the alpha chain.</text>
</comment>
<comment type="similarity">
    <text evidence="1">Belongs to the prokaryotic AdoMetDC family. Type 2 subfamily.</text>
</comment>
<evidence type="ECO:0000255" key="1">
    <source>
        <dbReference type="HAMAP-Rule" id="MF_00465"/>
    </source>
</evidence>
<accession>Q57T90</accession>
<name>SPED_SALCH</name>
<proteinExistence type="inferred from homology"/>
<gene>
    <name evidence="1" type="primary">speD</name>
    <name type="ordered locus">SCH_0165</name>
</gene>
<sequence>MKKLKLHGFNNLTKSLSFCIYDICYAKTAEERDGYIAYIDELYNANRLTEILSETCSIIGANILNIARQDYEPQGASVTILVSEEPVDPKLIDQTKHPGPLPETVVAHLDKSHICVHTYPESHPEGGLCTFRADIEVSTCGVISPLKALNYLIHQLESDIVTIDYRVRGFTRDVNGMKHFIDHEINSIQNFMSEDMKSLYDMVDVNVYQENIFHTKMLLKEFDLKHYMFHTKPEDLTETERQEITAALWKEMREIYYGRNISAV</sequence>
<keyword id="KW-0068">Autocatalytic cleavage</keyword>
<keyword id="KW-0210">Decarboxylase</keyword>
<keyword id="KW-0456">Lyase</keyword>
<keyword id="KW-0620">Polyamine biosynthesis</keyword>
<keyword id="KW-0670">Pyruvate</keyword>
<keyword id="KW-0949">S-adenosyl-L-methionine</keyword>
<keyword id="KW-0704">Schiff base</keyword>
<keyword id="KW-0745">Spermidine biosynthesis</keyword>
<keyword id="KW-0865">Zymogen</keyword>